<reference key="1">
    <citation type="journal article" date="2007" name="Science">
        <title>The Fusarium graminearum genome reveals a link between localized polymorphism and pathogen specialization.</title>
        <authorList>
            <person name="Cuomo C.A."/>
            <person name="Gueldener U."/>
            <person name="Xu J.-R."/>
            <person name="Trail F."/>
            <person name="Turgeon B.G."/>
            <person name="Di Pietro A."/>
            <person name="Walton J.D."/>
            <person name="Ma L.-J."/>
            <person name="Baker S.E."/>
            <person name="Rep M."/>
            <person name="Adam G."/>
            <person name="Antoniw J."/>
            <person name="Baldwin T."/>
            <person name="Calvo S.E."/>
            <person name="Chang Y.-L."/>
            <person name="DeCaprio D."/>
            <person name="Gale L.R."/>
            <person name="Gnerre S."/>
            <person name="Goswami R.S."/>
            <person name="Hammond-Kosack K."/>
            <person name="Harris L.J."/>
            <person name="Hilburn K."/>
            <person name="Kennell J.C."/>
            <person name="Kroken S."/>
            <person name="Magnuson J.K."/>
            <person name="Mannhaupt G."/>
            <person name="Mauceli E.W."/>
            <person name="Mewes H.-W."/>
            <person name="Mitterbauer R."/>
            <person name="Muehlbauer G."/>
            <person name="Muensterkoetter M."/>
            <person name="Nelson D."/>
            <person name="O'Donnell K."/>
            <person name="Ouellet T."/>
            <person name="Qi W."/>
            <person name="Quesneville H."/>
            <person name="Roncero M.I.G."/>
            <person name="Seong K.-Y."/>
            <person name="Tetko I.V."/>
            <person name="Urban M."/>
            <person name="Waalwijk C."/>
            <person name="Ward T.J."/>
            <person name="Yao J."/>
            <person name="Birren B.W."/>
            <person name="Kistler H.C."/>
        </authorList>
    </citation>
    <scope>NUCLEOTIDE SEQUENCE [LARGE SCALE GENOMIC DNA]</scope>
    <source>
        <strain>ATCC MYA-4620 / CBS 123657 / FGSC 9075 / NRRL 31084 / PH-1</strain>
    </source>
</reference>
<reference key="2">
    <citation type="journal article" date="2010" name="Nature">
        <title>Comparative genomics reveals mobile pathogenicity chromosomes in Fusarium.</title>
        <authorList>
            <person name="Ma L.-J."/>
            <person name="van der Does H.C."/>
            <person name="Borkovich K.A."/>
            <person name="Coleman J.J."/>
            <person name="Daboussi M.-J."/>
            <person name="Di Pietro A."/>
            <person name="Dufresne M."/>
            <person name="Freitag M."/>
            <person name="Grabherr M."/>
            <person name="Henrissat B."/>
            <person name="Houterman P.M."/>
            <person name="Kang S."/>
            <person name="Shim W.-B."/>
            <person name="Woloshuk C."/>
            <person name="Xie X."/>
            <person name="Xu J.-R."/>
            <person name="Antoniw J."/>
            <person name="Baker S.E."/>
            <person name="Bluhm B.H."/>
            <person name="Breakspear A."/>
            <person name="Brown D.W."/>
            <person name="Butchko R.A.E."/>
            <person name="Chapman S."/>
            <person name="Coulson R."/>
            <person name="Coutinho P.M."/>
            <person name="Danchin E.G.J."/>
            <person name="Diener A."/>
            <person name="Gale L.R."/>
            <person name="Gardiner D.M."/>
            <person name="Goff S."/>
            <person name="Hammond-Kosack K.E."/>
            <person name="Hilburn K."/>
            <person name="Hua-Van A."/>
            <person name="Jonkers W."/>
            <person name="Kazan K."/>
            <person name="Kodira C.D."/>
            <person name="Koehrsen M."/>
            <person name="Kumar L."/>
            <person name="Lee Y.-H."/>
            <person name="Li L."/>
            <person name="Manners J.M."/>
            <person name="Miranda-Saavedra D."/>
            <person name="Mukherjee M."/>
            <person name="Park G."/>
            <person name="Park J."/>
            <person name="Park S.-Y."/>
            <person name="Proctor R.H."/>
            <person name="Regev A."/>
            <person name="Ruiz-Roldan M.C."/>
            <person name="Sain D."/>
            <person name="Sakthikumar S."/>
            <person name="Sykes S."/>
            <person name="Schwartz D.C."/>
            <person name="Turgeon B.G."/>
            <person name="Wapinski I."/>
            <person name="Yoder O."/>
            <person name="Young S."/>
            <person name="Zeng Q."/>
            <person name="Zhou S."/>
            <person name="Galagan J."/>
            <person name="Cuomo C.A."/>
            <person name="Kistler H.C."/>
            <person name="Rep M."/>
        </authorList>
    </citation>
    <scope>GENOME REANNOTATION</scope>
    <source>
        <strain>ATCC MYA-4620 / CBS 123657 / FGSC 9075 / NRRL 31084 / PH-1</strain>
    </source>
</reference>
<reference key="3">
    <citation type="journal article" date="2015" name="BMC Genomics">
        <title>The completed genome sequence of the pathogenic ascomycete fungus Fusarium graminearum.</title>
        <authorList>
            <person name="King R."/>
            <person name="Urban M."/>
            <person name="Hammond-Kosack M.C.U."/>
            <person name="Hassani-Pak K."/>
            <person name="Hammond-Kosack K.E."/>
        </authorList>
    </citation>
    <scope>NUCLEOTIDE SEQUENCE [LARGE SCALE GENOMIC DNA]</scope>
    <source>
        <strain>ATCC MYA-4620 / CBS 123657 / FGSC 9075 / NRRL 31084 / PH-1</strain>
    </source>
</reference>
<reference key="4">
    <citation type="submission" date="2017-01" db="UniProtKB">
        <authorList>
            <consortium name="EnsemblFungi"/>
        </authorList>
    </citation>
    <scope>IDENTIFICATION</scope>
    <source>
        <strain>ATCC MYA-4620 / CBS 123657 / FGSC 9075 / NRRL 31084 / PH-1</strain>
    </source>
</reference>
<reference key="5">
    <citation type="journal article" date="2012" name="Plant Cell">
        <title>In planta stage-specific fungal gene profiling elucidates the molecular strategies of Fusarium graminearum growing inside wheat coleoptiles.</title>
        <authorList>
            <person name="Zhang X.W."/>
            <person name="Jia L.J."/>
            <person name="Zhang Y."/>
            <person name="Jiang G."/>
            <person name="Li X."/>
            <person name="Zhang D."/>
            <person name="Tang W.H."/>
        </authorList>
    </citation>
    <scope>INDUCTION</scope>
    <scope>DISRUPTION PHENOTYPE</scope>
</reference>
<reference key="6">
    <citation type="journal article" date="2014" name="PLoS ONE">
        <title>The Fusarium graminearum genome reveals more secondary metabolite gene clusters and hints of horizontal gene transfer.</title>
        <authorList>
            <person name="Sieber C.M."/>
            <person name="Lee W."/>
            <person name="Wong P."/>
            <person name="Muensterkoetter M."/>
            <person name="Mewes H.W."/>
            <person name="Schmeitzl C."/>
            <person name="Varga E."/>
            <person name="Berthiller F."/>
            <person name="Adam G."/>
            <person name="Gueldener U."/>
        </authorList>
    </citation>
    <scope>IDENTIFICATION</scope>
    <scope>INDUCTION</scope>
</reference>
<reference key="7">
    <citation type="journal article" date="2019" name="Nat. Commun.">
        <title>A linear nonribosomal octapeptide from Fusarium graminearum facilitates cell-to-cell invasion of wheat.</title>
        <authorList>
            <person name="Jia L.J."/>
            <person name="Tang H.Y."/>
            <person name="Wang W.Q."/>
            <person name="Yuan T.L."/>
            <person name="Wei W.Q."/>
            <person name="Pang B."/>
            <person name="Gong X.M."/>
            <person name="Wang S.F."/>
            <person name="Li Y.J."/>
            <person name="Zhang D."/>
            <person name="Liu W."/>
            <person name="Tang W.H."/>
        </authorList>
    </citation>
    <scope>FUNCTION</scope>
    <scope>DISRUPTION PHENOTYPE</scope>
</reference>
<reference key="8">
    <citation type="journal article" date="2019" name="Toxins">
        <title>Fusaoctaxin A, an example of a two-step mechanism for non-ribosomal peptide assembly and maturation in fungi.</title>
        <authorList>
            <person name="Westphal K.R."/>
            <person name="Nielsen K.A.H."/>
            <person name="Wollenberg R.D."/>
            <person name="Moellehoej M.B."/>
            <person name="Bachleitner S."/>
            <person name="Studt L."/>
            <person name="Lysoee E."/>
            <person name="Giese H."/>
            <person name="Wimmer R."/>
            <person name="Soerensen J.L."/>
            <person name="Sondergaard T.E."/>
        </authorList>
    </citation>
    <scope>FUNCTION</scope>
    <scope>INDUCTION</scope>
</reference>
<dbReference type="EC" id="3.5.-.-" evidence="10"/>
<dbReference type="EMBL" id="HG970334">
    <property type="protein sequence ID" value="CEF88824.1"/>
    <property type="molecule type" value="Genomic_DNA"/>
</dbReference>
<dbReference type="RefSeq" id="XP_011325378.1">
    <property type="nucleotide sequence ID" value="XM_011327076.1"/>
</dbReference>
<dbReference type="SMR" id="I1S2J6"/>
<dbReference type="STRING" id="229533.I1S2J6"/>
<dbReference type="KEGG" id="fgr:FGSG_10992"/>
<dbReference type="VEuPathDB" id="FungiDB:FGRAMPH1_01G20963"/>
<dbReference type="eggNOG" id="KOG0725">
    <property type="taxonomic scope" value="Eukaryota"/>
</dbReference>
<dbReference type="HOGENOM" id="CLU_029940_1_0_1"/>
<dbReference type="InParanoid" id="I1S2J6"/>
<dbReference type="OrthoDB" id="33286at110618"/>
<dbReference type="PHI-base" id="PHI:9039"/>
<dbReference type="Proteomes" id="UP000070720">
    <property type="component" value="Chromosome 3"/>
</dbReference>
<dbReference type="GO" id="GO:0016810">
    <property type="term" value="F:hydrolase activity, acting on carbon-nitrogen (but not peptide) bonds"/>
    <property type="evidence" value="ECO:0007669"/>
    <property type="project" value="InterPro"/>
</dbReference>
<dbReference type="GO" id="GO:0046872">
    <property type="term" value="F:metal ion binding"/>
    <property type="evidence" value="ECO:0007669"/>
    <property type="project" value="UniProtKB-KW"/>
</dbReference>
<dbReference type="GO" id="GO:0005975">
    <property type="term" value="P:carbohydrate metabolic process"/>
    <property type="evidence" value="ECO:0007669"/>
    <property type="project" value="InterPro"/>
</dbReference>
<dbReference type="CDD" id="cd10938">
    <property type="entry name" value="CE4_HpPgdA_like"/>
    <property type="match status" value="1"/>
</dbReference>
<dbReference type="Gene3D" id="3.20.20.370">
    <property type="entry name" value="Glycoside hydrolase/deacetylase"/>
    <property type="match status" value="1"/>
</dbReference>
<dbReference type="InterPro" id="IPR011330">
    <property type="entry name" value="Glyco_hydro/deAcase_b/a-brl"/>
</dbReference>
<dbReference type="InterPro" id="IPR002509">
    <property type="entry name" value="NODB_dom"/>
</dbReference>
<dbReference type="InterPro" id="IPR037950">
    <property type="entry name" value="PgdA-like"/>
</dbReference>
<dbReference type="PANTHER" id="PTHR47561:SF2">
    <property type="entry name" value="HYPOTHETICAL POLYSACCHARIDE DEACETYLASE (EUROFUNG)"/>
    <property type="match status" value="1"/>
</dbReference>
<dbReference type="PANTHER" id="PTHR47561">
    <property type="entry name" value="POLYSACCHARIDE DEACETYLASE FAMILY PROTEIN (AFU_ORTHOLOGUE AFUA_6G05030)"/>
    <property type="match status" value="1"/>
</dbReference>
<dbReference type="Pfam" id="PF01522">
    <property type="entry name" value="Polysacc_deac_1"/>
    <property type="match status" value="1"/>
</dbReference>
<dbReference type="SUPFAM" id="SSF88713">
    <property type="entry name" value="Glycoside hydrolase/deacetylase"/>
    <property type="match status" value="1"/>
</dbReference>
<dbReference type="PROSITE" id="PS51677">
    <property type="entry name" value="NODB"/>
    <property type="match status" value="1"/>
</dbReference>
<proteinExistence type="evidence at transcript level"/>
<comment type="function">
    <text evidence="5 6 10">Peptidoglycan deacetylase-like protein; part of the Fg3_54/C64 gene cluster that mediates the biosynthesis of the octapeptide fusaoctaxin A, a virulence factor that is required for cell-to-cell invasiveness of plant host (PubMed:30804501). The 2 nonribosomal peptide synthetases NRPS9 and NRPS5 form an assembly line which likely utilizes GABA as a starter unit (loaded on the unique module M1 of NRPS9) and sequentially incorporates seven extender units composed of the residues L-Ala, L-allo-Ile, L-Ser, L-Val, L-Ser, L-Leu and L-Leu, respectively (PubMed:30804501, PubMed:31100892). During the process, each of the residues that are tethered on modules M3-M7 of NRPS5 containing an E domain can undergo an epimerization reaction to produce a D-configuration before the transpeptidation reaction occurs (PubMed:30804501, PubMed:31100892). The elongation of the peptidyl chain might be terminated by module M8-mediated L-Leu incorporation, followed by R domain-catalyzed 4 electron reduction to release the resulting octapeptide from the assembly line as an alcohol (PubMed:30804501, PubMed:31100892). Fusaoctaxin A is cleaved by the cluster specific ABC transporter FGM5 to the pentapeptide fusapentaxin A and the tripeptide fusatrixin A (PubMed:31100892). The other enzymes from the cluster, FGM1, FGM2, FGM3 and FGM9 seem not to be involved in the biosynthesis of fusaoctaxin A and their functions have still to be determined (Probable).</text>
</comment>
<comment type="induction">
    <text evidence="3 4 6">Expression is positively regulated by the cluster-specific transcription factor FGM4 and is induced during infection of coleoptiles of wheat seedlings (PubMed:23266949, PubMed:25333987). The fusaoctaxin A gene cluster is silenced by H3K27 trimethylation by the histone methyltransferase KMT6 (PubMed:31100892).</text>
</comment>
<comment type="disruption phenotype">
    <text evidence="3 5">Leads to reduced virulence and produces significantly smaller lesions and fewer spikelets with blight symptoms on susceptible wheat cultivars.</text>
</comment>
<comment type="similarity">
    <text evidence="9">Belongs to the polysaccharide deacetylase family.</text>
</comment>
<keyword id="KW-0378">Hydrolase</keyword>
<keyword id="KW-0479">Metal-binding</keyword>
<keyword id="KW-1185">Reference proteome</keyword>
<keyword id="KW-0862">Zinc</keyword>
<feature type="chain" id="PRO_0000449949" description="Peptidoglycan deacetylase-like protein FGM2">
    <location>
        <begin position="1"/>
        <end position="338"/>
    </location>
</feature>
<feature type="domain" description="NodB homology" evidence="2">
    <location>
        <begin position="65"/>
        <end position="257"/>
    </location>
</feature>
<feature type="binding site" evidence="1">
    <location>
        <position position="49"/>
    </location>
    <ligand>
        <name>Zn(2+)</name>
        <dbReference type="ChEBI" id="CHEBI:29105"/>
    </ligand>
</feature>
<feature type="binding site" evidence="1">
    <location>
        <position position="124"/>
    </location>
    <ligand>
        <name>Zn(2+)</name>
        <dbReference type="ChEBI" id="CHEBI:29105"/>
    </ligand>
</feature>
<feature type="binding site" evidence="1">
    <location>
        <position position="128"/>
    </location>
    <ligand>
        <name>Zn(2+)</name>
        <dbReference type="ChEBI" id="CHEBI:29105"/>
    </ligand>
</feature>
<organism>
    <name type="scientific">Gibberella zeae (strain ATCC MYA-4620 / CBS 123657 / FGSC 9075 / NRRL 31084 / PH-1)</name>
    <name type="common">Wheat head blight fungus</name>
    <name type="synonym">Fusarium graminearum</name>
    <dbReference type="NCBI Taxonomy" id="229533"/>
    <lineage>
        <taxon>Eukaryota</taxon>
        <taxon>Fungi</taxon>
        <taxon>Dikarya</taxon>
        <taxon>Ascomycota</taxon>
        <taxon>Pezizomycotina</taxon>
        <taxon>Sordariomycetes</taxon>
        <taxon>Hypocreomycetidae</taxon>
        <taxon>Hypocreales</taxon>
        <taxon>Nectriaceae</taxon>
        <taxon>Fusarium</taxon>
    </lineage>
</organism>
<gene>
    <name evidence="8" type="primary">FGM2</name>
    <name type="ORF">FG10992</name>
    <name type="ORF">FGRAMPH1_01T20963</name>
</gene>
<evidence type="ECO:0000250" key="1">
    <source>
        <dbReference type="UniProtKB" id="B5ZA76"/>
    </source>
</evidence>
<evidence type="ECO:0000255" key="2">
    <source>
        <dbReference type="PROSITE-ProRule" id="PRU01014"/>
    </source>
</evidence>
<evidence type="ECO:0000269" key="3">
    <source>
    </source>
</evidence>
<evidence type="ECO:0000269" key="4">
    <source>
    </source>
</evidence>
<evidence type="ECO:0000269" key="5">
    <source>
    </source>
</evidence>
<evidence type="ECO:0000269" key="6">
    <source>
    </source>
</evidence>
<evidence type="ECO:0000303" key="7">
    <source>
    </source>
</evidence>
<evidence type="ECO:0000303" key="8">
    <source>
    </source>
</evidence>
<evidence type="ECO:0000305" key="9"/>
<evidence type="ECO:0000305" key="10">
    <source>
    </source>
</evidence>
<name>FGM2_GIBZE</name>
<sequence length="338" mass="37828">MQIDHSGDSSEASQAHDSKLHHSHLLGNIPLGLPEARRRVKILVSVDFDAVSGWMGTGQHSRNCLSDYSAGIFAGRVGVGRLLKILDRVGIAEKVTWFIPGHSMETFPLETKAIVDSGAEIALHGYCHEDCTQLDPQQQQDILDKCITLAESLTGKRPVGFRAPLYRIDHDTISLLERKGFLYDTSLSGHDAQLYYLDSGFPLDVVDYSKSASTWMKPSPQPRQLSVVEIPANWYMEDMTPMQFLPNVTNSHGFVSSEAIEKMWKDRFNWLWNWGPDGSGPGDFVFPLVLHPDTSGMAHVAGTIEGMLRWLKEWGPQVEFVTYEEAAREFLLDKEVPA</sequence>
<accession>I1S2J6</accession>
<accession>A0A098E518</accession>
<protein>
    <recommendedName>
        <fullName evidence="8">Peptidoglycan deacetylase-like protein FGM2</fullName>
        <ecNumber evidence="10">3.5.-.-</ecNumber>
    </recommendedName>
    <alternativeName>
        <fullName evidence="7">C64 cluster protein NRPS5</fullName>
    </alternativeName>
    <alternativeName>
        <fullName evidence="8">Fg3_54 cluster protein FGM2</fullName>
    </alternativeName>
    <alternativeName>
        <fullName evidence="8">Fusaoctaxin A biosynthesis cluster protein FGM2</fullName>
    </alternativeName>
</protein>